<comment type="function">
    <text evidence="3">Transcription factor required for normal development of thymus, parathyroid glands, ultimobranchial bodies, teeth, skeletal elements of skull and larynx as well as distal limbs.</text>
</comment>
<comment type="subunit">
    <text evidence="1">Interacts with KDM5B.</text>
</comment>
<comment type="subcellular location">
    <subcellularLocation>
        <location>Nucleus</location>
    </subcellularLocation>
</comment>
<comment type="tissue specificity">
    <text>In the embryo, expressed in pharyngeal pouches and derivatives, developing vertebral column, tail, head and limbs.</text>
</comment>
<comment type="developmental stage">
    <text>In the embryo, expression increases slightly from day 9.5 to day 11.5, remains almost constant until day 14.5 and then decreases.</text>
</comment>
<comment type="disruption phenotype">
    <text evidence="3">Death shortly after birth. Mice lack thymus, parathyroid glands, ultimobranchial bodies and teeth. They show craniofacial and visceral malformations as well as malformations of their distal limbs.</text>
</comment>
<reference key="1">
    <citation type="journal article" date="1995" name="Dev. Biol.">
        <title>Characterization and developmental expression of Pax9, a paired-box-containing gene related to Pax1.</title>
        <authorList>
            <person name="Neubuesser A."/>
            <person name="Koseki H."/>
            <person name="Balling R."/>
        </authorList>
    </citation>
    <scope>NUCLEOTIDE SEQUENCE [MRNA]</scope>
</reference>
<reference key="2">
    <citation type="journal article" date="2004" name="Genome Res.">
        <title>The status, quality, and expansion of the NIH full-length cDNA project: the Mammalian Gene Collection (MGC).</title>
        <authorList>
            <consortium name="The MGC Project Team"/>
        </authorList>
    </citation>
    <scope>NUCLEOTIDE SEQUENCE [LARGE SCALE MRNA]</scope>
    <source>
        <strain>FVB/N</strain>
        <tissue>Mammary gland</tissue>
    </source>
</reference>
<reference key="3">
    <citation type="journal article" date="1993" name="Mamm. Genome">
        <title>A new Pax gene, Pax-9, maps to mouse chromosome 12.</title>
        <authorList>
            <person name="Wallin J."/>
            <person name="Mizutani Y."/>
            <person name="Imai K."/>
            <person name="Miyashita N."/>
            <person name="Moriwaki K."/>
            <person name="Taniguchi M."/>
            <person name="Koseki H."/>
            <person name="Balling R."/>
        </authorList>
    </citation>
    <scope>NUCLEOTIDE SEQUENCE [GENOMIC DNA] OF 19-111</scope>
    <source>
        <strain>C57BR/Y</strain>
    </source>
</reference>
<reference key="4">
    <citation type="journal article" date="1998" name="Genes Dev.">
        <title>Pax9-deficient mice lack pharyngeal pouch derivatives and teeth and exhibit craniofacial and limb abnormalities.</title>
        <authorList>
            <person name="Peters H."/>
            <person name="Neubuser A."/>
            <person name="Kratochwil K."/>
            <person name="Balling R."/>
        </authorList>
    </citation>
    <scope>FUNCTION</scope>
    <scope>DISRUPTION PHENOTYPE</scope>
</reference>
<gene>
    <name type="primary">Pax9</name>
    <name type="synonym">Pax-9</name>
</gene>
<protein>
    <recommendedName>
        <fullName>Paired box protein Pax-9</fullName>
    </recommendedName>
</protein>
<evidence type="ECO:0000250" key="1"/>
<evidence type="ECO:0000255" key="2">
    <source>
        <dbReference type="PROSITE-ProRule" id="PRU00381"/>
    </source>
</evidence>
<evidence type="ECO:0000269" key="3">
    <source>
    </source>
</evidence>
<sequence length="342" mass="36389">MEPAFGEVNQLGGVFVNGRPLPNAIRLRIVELAQLGIRPCDISRQLRVSHGCVSKILARYNETGSILPGAIGGSKPRVTTPTVVKHIRTYKQRDPGIFAWEIRDRLLADGVCDKYNVPSVSSISRILRNKIGNLAQQGHYDSYKQHQPAPQPALPYNHIYSYPSPITAAAAKVPTPPGVPAIPGSVALPRTWPSSHSVTDILGIRSITDQGVSDSSPYHSPKVEEWSSLGRNNFPAAAPHAVNGLEKGALEQEAKYGQAPNGLPAVSSFVSASSMAPYPTPAQVSPYMTYSAAPSGYVAGHGWQHAGSTPLSPHNCDIPASLAFKGMQAAREGSHSVTASAL</sequence>
<name>PAX9_MOUSE</name>
<organism>
    <name type="scientific">Mus musculus</name>
    <name type="common">Mouse</name>
    <dbReference type="NCBI Taxonomy" id="10090"/>
    <lineage>
        <taxon>Eukaryota</taxon>
        <taxon>Metazoa</taxon>
        <taxon>Chordata</taxon>
        <taxon>Craniata</taxon>
        <taxon>Vertebrata</taxon>
        <taxon>Euteleostomi</taxon>
        <taxon>Mammalia</taxon>
        <taxon>Eutheria</taxon>
        <taxon>Euarchontoglires</taxon>
        <taxon>Glires</taxon>
        <taxon>Rodentia</taxon>
        <taxon>Myomorpha</taxon>
        <taxon>Muroidea</taxon>
        <taxon>Muridae</taxon>
        <taxon>Murinae</taxon>
        <taxon>Mus</taxon>
        <taxon>Mus</taxon>
    </lineage>
</organism>
<accession>P47242</accession>
<dbReference type="EMBL" id="X84000">
    <property type="protein sequence ID" value="CAA58824.1"/>
    <property type="molecule type" value="mRNA"/>
</dbReference>
<dbReference type="EMBL" id="BC005794">
    <property type="protein sequence ID" value="AAH05794.1"/>
    <property type="molecule type" value="mRNA"/>
</dbReference>
<dbReference type="EMBL" id="X73037">
    <property type="protein sequence ID" value="CAA51518.1"/>
    <property type="molecule type" value="Genomic_DNA"/>
</dbReference>
<dbReference type="CCDS" id="CCDS25924.1"/>
<dbReference type="PIR" id="I48740">
    <property type="entry name" value="S57652"/>
</dbReference>
<dbReference type="RefSeq" id="NP_035171.1">
    <property type="nucleotide sequence ID" value="NM_011041.3"/>
</dbReference>
<dbReference type="RefSeq" id="XP_006515642.1">
    <property type="nucleotide sequence ID" value="XM_006515579.4"/>
</dbReference>
<dbReference type="RefSeq" id="XP_006515643.1">
    <property type="nucleotide sequence ID" value="XM_006515580.4"/>
</dbReference>
<dbReference type="RefSeq" id="XP_006515644.1">
    <property type="nucleotide sequence ID" value="XM_006515581.4"/>
</dbReference>
<dbReference type="RefSeq" id="XP_017170480.1">
    <property type="nucleotide sequence ID" value="XM_017314991.1"/>
</dbReference>
<dbReference type="SMR" id="P47242"/>
<dbReference type="BioGRID" id="202036">
    <property type="interactions" value="2"/>
</dbReference>
<dbReference type="FunCoup" id="P47242">
    <property type="interactions" value="734"/>
</dbReference>
<dbReference type="IntAct" id="P47242">
    <property type="interactions" value="4"/>
</dbReference>
<dbReference type="STRING" id="10090.ENSMUSP00000117928"/>
<dbReference type="GlyGen" id="P47242">
    <property type="glycosylation" value="2 sites"/>
</dbReference>
<dbReference type="iPTMnet" id="P47242"/>
<dbReference type="PhosphoSitePlus" id="P47242"/>
<dbReference type="PaxDb" id="10090-ENSMUSP00000117928"/>
<dbReference type="ProteomicsDB" id="287785"/>
<dbReference type="TopDownProteomics" id="P47242"/>
<dbReference type="Antibodypedia" id="9893">
    <property type="antibodies" value="305 antibodies from 36 providers"/>
</dbReference>
<dbReference type="DNASU" id="18511"/>
<dbReference type="Ensembl" id="ENSMUST00000001538.10">
    <property type="protein sequence ID" value="ENSMUSP00000001538.10"/>
    <property type="gene ID" value="ENSMUSG00000001497.19"/>
</dbReference>
<dbReference type="Ensembl" id="ENSMUST00000153250.9">
    <property type="protein sequence ID" value="ENSMUSP00000117928.2"/>
    <property type="gene ID" value="ENSMUSG00000001497.19"/>
</dbReference>
<dbReference type="GeneID" id="18511"/>
<dbReference type="KEGG" id="mmu:18511"/>
<dbReference type="UCSC" id="uc007npi.1">
    <property type="organism name" value="mouse"/>
</dbReference>
<dbReference type="AGR" id="MGI:97493"/>
<dbReference type="CTD" id="5083"/>
<dbReference type="MGI" id="MGI:97493">
    <property type="gene designation" value="Pax9"/>
</dbReference>
<dbReference type="VEuPathDB" id="HostDB:ENSMUSG00000001497"/>
<dbReference type="eggNOG" id="KOG3517">
    <property type="taxonomic scope" value="Eukaryota"/>
</dbReference>
<dbReference type="GeneTree" id="ENSGT00940000159896"/>
<dbReference type="HOGENOM" id="CLU_019281_3_0_1"/>
<dbReference type="InParanoid" id="P47242"/>
<dbReference type="OMA" id="STMAPYP"/>
<dbReference type="OrthoDB" id="3225452at2759"/>
<dbReference type="PhylomeDB" id="P47242"/>
<dbReference type="TreeFam" id="TF315397"/>
<dbReference type="BioGRID-ORCS" id="18511">
    <property type="hits" value="2 hits in 79 CRISPR screens"/>
</dbReference>
<dbReference type="PRO" id="PR:P47242"/>
<dbReference type="Proteomes" id="UP000000589">
    <property type="component" value="Chromosome 12"/>
</dbReference>
<dbReference type="RNAct" id="P47242">
    <property type="molecule type" value="protein"/>
</dbReference>
<dbReference type="Bgee" id="ENSMUSG00000001497">
    <property type="expression patterns" value="Expressed in parotid gland and 132 other cell types or tissues"/>
</dbReference>
<dbReference type="ExpressionAtlas" id="P47242">
    <property type="expression patterns" value="baseline and differential"/>
</dbReference>
<dbReference type="GO" id="GO:0005730">
    <property type="term" value="C:nucleolus"/>
    <property type="evidence" value="ECO:0007669"/>
    <property type="project" value="Ensembl"/>
</dbReference>
<dbReference type="GO" id="GO:0005654">
    <property type="term" value="C:nucleoplasm"/>
    <property type="evidence" value="ECO:0007669"/>
    <property type="project" value="Ensembl"/>
</dbReference>
<dbReference type="GO" id="GO:0005667">
    <property type="term" value="C:transcription regulator complex"/>
    <property type="evidence" value="ECO:0000304"/>
    <property type="project" value="MGI"/>
</dbReference>
<dbReference type="GO" id="GO:0001228">
    <property type="term" value="F:DNA-binding transcription activator activity, RNA polymerase II-specific"/>
    <property type="evidence" value="ECO:0000314"/>
    <property type="project" value="NTNU_SB"/>
</dbReference>
<dbReference type="GO" id="GO:0003700">
    <property type="term" value="F:DNA-binding transcription factor activity"/>
    <property type="evidence" value="ECO:0000304"/>
    <property type="project" value="MGI"/>
</dbReference>
<dbReference type="GO" id="GO:0000977">
    <property type="term" value="F:RNA polymerase II transcription regulatory region sequence-specific DNA binding"/>
    <property type="evidence" value="ECO:0000315"/>
    <property type="project" value="NTNU_SB"/>
</dbReference>
<dbReference type="GO" id="GO:0009887">
    <property type="term" value="P:animal organ morphogenesis"/>
    <property type="evidence" value="ECO:0000304"/>
    <property type="project" value="MGI"/>
</dbReference>
<dbReference type="GO" id="GO:0071363">
    <property type="term" value="P:cellular response to growth factor stimulus"/>
    <property type="evidence" value="ECO:0000314"/>
    <property type="project" value="MGI"/>
</dbReference>
<dbReference type="GO" id="GO:0007492">
    <property type="term" value="P:endoderm development"/>
    <property type="evidence" value="ECO:0000315"/>
    <property type="project" value="MGI"/>
</dbReference>
<dbReference type="GO" id="GO:0060325">
    <property type="term" value="P:face morphogenesis"/>
    <property type="evidence" value="ECO:0000316"/>
    <property type="project" value="MGI"/>
</dbReference>
<dbReference type="GO" id="GO:0045892">
    <property type="term" value="P:negative regulation of DNA-templated transcription"/>
    <property type="evidence" value="ECO:0007669"/>
    <property type="project" value="Ensembl"/>
</dbReference>
<dbReference type="GO" id="GO:0042476">
    <property type="term" value="P:odontogenesis"/>
    <property type="evidence" value="ECO:0000316"/>
    <property type="project" value="MGI"/>
</dbReference>
<dbReference type="GO" id="GO:0045944">
    <property type="term" value="P:positive regulation of transcription by RNA polymerase II"/>
    <property type="evidence" value="ECO:0000314"/>
    <property type="project" value="NTNU_SB"/>
</dbReference>
<dbReference type="GO" id="GO:0006355">
    <property type="term" value="P:regulation of DNA-templated transcription"/>
    <property type="evidence" value="ECO:0000304"/>
    <property type="project" value="MGI"/>
</dbReference>
<dbReference type="GO" id="GO:0042481">
    <property type="term" value="P:regulation of odontogenesis"/>
    <property type="evidence" value="ECO:0000316"/>
    <property type="project" value="MGI"/>
</dbReference>
<dbReference type="CDD" id="cd00131">
    <property type="entry name" value="PAX"/>
    <property type="match status" value="1"/>
</dbReference>
<dbReference type="FunFam" id="1.10.10.10:FF:000003">
    <property type="entry name" value="Paired box protein Pax-6"/>
    <property type="match status" value="1"/>
</dbReference>
<dbReference type="FunFam" id="1.10.10.10:FF:000084">
    <property type="entry name" value="paired box protein Pax-9"/>
    <property type="match status" value="1"/>
</dbReference>
<dbReference type="Gene3D" id="1.10.10.10">
    <property type="entry name" value="Winged helix-like DNA-binding domain superfamily/Winged helix DNA-binding domain"/>
    <property type="match status" value="2"/>
</dbReference>
<dbReference type="InterPro" id="IPR009057">
    <property type="entry name" value="Homeodomain-like_sf"/>
</dbReference>
<dbReference type="InterPro" id="IPR043182">
    <property type="entry name" value="PAIRED_DNA-bd_dom"/>
</dbReference>
<dbReference type="InterPro" id="IPR001523">
    <property type="entry name" value="Paired_dom"/>
</dbReference>
<dbReference type="InterPro" id="IPR043565">
    <property type="entry name" value="PAX_fam"/>
</dbReference>
<dbReference type="InterPro" id="IPR036388">
    <property type="entry name" value="WH-like_DNA-bd_sf"/>
</dbReference>
<dbReference type="PANTHER" id="PTHR45636">
    <property type="entry name" value="PAIRED BOX PROTEIN PAX-6-RELATED-RELATED"/>
    <property type="match status" value="1"/>
</dbReference>
<dbReference type="PANTHER" id="PTHR45636:SF13">
    <property type="entry name" value="PAIRED BOX PROTEIN PAX-9"/>
    <property type="match status" value="1"/>
</dbReference>
<dbReference type="Pfam" id="PF00292">
    <property type="entry name" value="PAX"/>
    <property type="match status" value="1"/>
</dbReference>
<dbReference type="PRINTS" id="PR00027">
    <property type="entry name" value="PAIREDBOX"/>
</dbReference>
<dbReference type="SMART" id="SM00351">
    <property type="entry name" value="PAX"/>
    <property type="match status" value="1"/>
</dbReference>
<dbReference type="SUPFAM" id="SSF46689">
    <property type="entry name" value="Homeodomain-like"/>
    <property type="match status" value="1"/>
</dbReference>
<dbReference type="PROSITE" id="PS00034">
    <property type="entry name" value="PAIRED_1"/>
    <property type="match status" value="1"/>
</dbReference>
<dbReference type="PROSITE" id="PS51057">
    <property type="entry name" value="PAIRED_2"/>
    <property type="match status" value="1"/>
</dbReference>
<keyword id="KW-0217">Developmental protein</keyword>
<keyword id="KW-0238">DNA-binding</keyword>
<keyword id="KW-0539">Nucleus</keyword>
<keyword id="KW-0563">Paired box</keyword>
<keyword id="KW-1185">Reference proteome</keyword>
<keyword id="KW-0804">Transcription</keyword>
<keyword id="KW-0805">Transcription regulation</keyword>
<proteinExistence type="evidence at transcript level"/>
<feature type="chain" id="PRO_0000050208" description="Paired box protein Pax-9">
    <location>
        <begin position="1"/>
        <end position="342"/>
    </location>
</feature>
<feature type="DNA-binding region" description="Paired" evidence="2">
    <location>
        <begin position="4"/>
        <end position="130"/>
    </location>
</feature>
<feature type="region of interest" description="PAI subdomain" evidence="2">
    <location>
        <begin position="7"/>
        <end position="63"/>
    </location>
</feature>
<feature type="region of interest" description="RED subdomain" evidence="2">
    <location>
        <begin position="82"/>
        <end position="130"/>
    </location>
</feature>
<feature type="region of interest" description="Interaction with KDM5B" evidence="1">
    <location>
        <begin position="168"/>
        <end position="189"/>
    </location>
</feature>